<evidence type="ECO:0000255" key="1">
    <source>
        <dbReference type="HAMAP-Rule" id="MF_00291"/>
    </source>
</evidence>
<evidence type="ECO:0000305" key="2"/>
<proteinExistence type="inferred from homology"/>
<protein>
    <recommendedName>
        <fullName evidence="1">Small ribosomal subunit protein uS2</fullName>
    </recommendedName>
    <alternativeName>
        <fullName evidence="2">30S ribosomal protein S2</fullName>
    </alternativeName>
</protein>
<comment type="similarity">
    <text evidence="1">Belongs to the universal ribosomal protein uS2 family.</text>
</comment>
<sequence>MSLMREMLEAGVHFGHQTRYWNPKMAPYIFGHRNKIHIINLEQTVAKYQEASKFVKQLVARGGNILFVGTKRAARELVATEAARCGMPYVDARWLGGMLTNFKTVKSSIKRLKDMEAMVADGGFERMTKKEGLLFQRELDKLNKSIGGIKDMNGLPDALFVIDVGYHKIAVAEAKVLGIPVVAVVDTNHSPDGIDHVIPGNDDSARAIALYAKGMADAVLEGREQNINGLVEEIGEGQEEFVEVQDNQA</sequence>
<keyword id="KW-0687">Ribonucleoprotein</keyword>
<keyword id="KW-0689">Ribosomal protein</keyword>
<dbReference type="EMBL" id="BX640427">
    <property type="protein sequence ID" value="CAE36829.1"/>
    <property type="molecule type" value="Genomic_DNA"/>
</dbReference>
<dbReference type="RefSeq" id="WP_003811803.1">
    <property type="nucleotide sequence ID" value="NC_002928.3"/>
</dbReference>
<dbReference type="SMR" id="Q7WA60"/>
<dbReference type="GeneID" id="93203286"/>
<dbReference type="KEGG" id="bpa:BPP1527"/>
<dbReference type="HOGENOM" id="CLU_040318_1_2_4"/>
<dbReference type="Proteomes" id="UP000001421">
    <property type="component" value="Chromosome"/>
</dbReference>
<dbReference type="GO" id="GO:0022627">
    <property type="term" value="C:cytosolic small ribosomal subunit"/>
    <property type="evidence" value="ECO:0007669"/>
    <property type="project" value="TreeGrafter"/>
</dbReference>
<dbReference type="GO" id="GO:0003735">
    <property type="term" value="F:structural constituent of ribosome"/>
    <property type="evidence" value="ECO:0007669"/>
    <property type="project" value="InterPro"/>
</dbReference>
<dbReference type="GO" id="GO:0006412">
    <property type="term" value="P:translation"/>
    <property type="evidence" value="ECO:0007669"/>
    <property type="project" value="UniProtKB-UniRule"/>
</dbReference>
<dbReference type="CDD" id="cd01425">
    <property type="entry name" value="RPS2"/>
    <property type="match status" value="1"/>
</dbReference>
<dbReference type="FunFam" id="1.10.287.610:FF:000001">
    <property type="entry name" value="30S ribosomal protein S2"/>
    <property type="match status" value="1"/>
</dbReference>
<dbReference type="Gene3D" id="3.40.50.10490">
    <property type="entry name" value="Glucose-6-phosphate isomerase like protein, domain 1"/>
    <property type="match status" value="1"/>
</dbReference>
<dbReference type="Gene3D" id="1.10.287.610">
    <property type="entry name" value="Helix hairpin bin"/>
    <property type="match status" value="1"/>
</dbReference>
<dbReference type="HAMAP" id="MF_00291_B">
    <property type="entry name" value="Ribosomal_uS2_B"/>
    <property type="match status" value="1"/>
</dbReference>
<dbReference type="InterPro" id="IPR001865">
    <property type="entry name" value="Ribosomal_uS2"/>
</dbReference>
<dbReference type="InterPro" id="IPR005706">
    <property type="entry name" value="Ribosomal_uS2_bac/mit/plastid"/>
</dbReference>
<dbReference type="InterPro" id="IPR018130">
    <property type="entry name" value="Ribosomal_uS2_CS"/>
</dbReference>
<dbReference type="InterPro" id="IPR023591">
    <property type="entry name" value="Ribosomal_uS2_flav_dom_sf"/>
</dbReference>
<dbReference type="NCBIfam" id="TIGR01011">
    <property type="entry name" value="rpsB_bact"/>
    <property type="match status" value="1"/>
</dbReference>
<dbReference type="PANTHER" id="PTHR12534">
    <property type="entry name" value="30S RIBOSOMAL PROTEIN S2 PROKARYOTIC AND ORGANELLAR"/>
    <property type="match status" value="1"/>
</dbReference>
<dbReference type="PANTHER" id="PTHR12534:SF0">
    <property type="entry name" value="SMALL RIBOSOMAL SUBUNIT PROTEIN US2M"/>
    <property type="match status" value="1"/>
</dbReference>
<dbReference type="Pfam" id="PF00318">
    <property type="entry name" value="Ribosomal_S2"/>
    <property type="match status" value="1"/>
</dbReference>
<dbReference type="PRINTS" id="PR00395">
    <property type="entry name" value="RIBOSOMALS2"/>
</dbReference>
<dbReference type="SUPFAM" id="SSF52313">
    <property type="entry name" value="Ribosomal protein S2"/>
    <property type="match status" value="1"/>
</dbReference>
<dbReference type="PROSITE" id="PS00962">
    <property type="entry name" value="RIBOSOMAL_S2_1"/>
    <property type="match status" value="1"/>
</dbReference>
<organism>
    <name type="scientific">Bordetella parapertussis (strain 12822 / ATCC BAA-587 / NCTC 13253)</name>
    <dbReference type="NCBI Taxonomy" id="257311"/>
    <lineage>
        <taxon>Bacteria</taxon>
        <taxon>Pseudomonadati</taxon>
        <taxon>Pseudomonadota</taxon>
        <taxon>Betaproteobacteria</taxon>
        <taxon>Burkholderiales</taxon>
        <taxon>Alcaligenaceae</taxon>
        <taxon>Bordetella</taxon>
    </lineage>
</organism>
<feature type="chain" id="PRO_0000134138" description="Small ribosomal subunit protein uS2">
    <location>
        <begin position="1"/>
        <end position="249"/>
    </location>
</feature>
<name>RS2_BORPA</name>
<accession>Q7WA60</accession>
<gene>
    <name evidence="1" type="primary">rpsB</name>
    <name type="ordered locus">BPP1527</name>
</gene>
<reference key="1">
    <citation type="journal article" date="2003" name="Nat. Genet.">
        <title>Comparative analysis of the genome sequences of Bordetella pertussis, Bordetella parapertussis and Bordetella bronchiseptica.</title>
        <authorList>
            <person name="Parkhill J."/>
            <person name="Sebaihia M."/>
            <person name="Preston A."/>
            <person name="Murphy L.D."/>
            <person name="Thomson N.R."/>
            <person name="Harris D.E."/>
            <person name="Holden M.T.G."/>
            <person name="Churcher C.M."/>
            <person name="Bentley S.D."/>
            <person name="Mungall K.L."/>
            <person name="Cerdeno-Tarraga A.-M."/>
            <person name="Temple L."/>
            <person name="James K.D."/>
            <person name="Harris B."/>
            <person name="Quail M.A."/>
            <person name="Achtman M."/>
            <person name="Atkin R."/>
            <person name="Baker S."/>
            <person name="Basham D."/>
            <person name="Bason N."/>
            <person name="Cherevach I."/>
            <person name="Chillingworth T."/>
            <person name="Collins M."/>
            <person name="Cronin A."/>
            <person name="Davis P."/>
            <person name="Doggett J."/>
            <person name="Feltwell T."/>
            <person name="Goble A."/>
            <person name="Hamlin N."/>
            <person name="Hauser H."/>
            <person name="Holroyd S."/>
            <person name="Jagels K."/>
            <person name="Leather S."/>
            <person name="Moule S."/>
            <person name="Norberczak H."/>
            <person name="O'Neil S."/>
            <person name="Ormond D."/>
            <person name="Price C."/>
            <person name="Rabbinowitsch E."/>
            <person name="Rutter S."/>
            <person name="Sanders M."/>
            <person name="Saunders D."/>
            <person name="Seeger K."/>
            <person name="Sharp S."/>
            <person name="Simmonds M."/>
            <person name="Skelton J."/>
            <person name="Squares R."/>
            <person name="Squares S."/>
            <person name="Stevens K."/>
            <person name="Unwin L."/>
            <person name="Whitehead S."/>
            <person name="Barrell B.G."/>
            <person name="Maskell D.J."/>
        </authorList>
    </citation>
    <scope>NUCLEOTIDE SEQUENCE [LARGE SCALE GENOMIC DNA]</scope>
    <source>
        <strain>12822 / ATCC BAA-587 / NCTC 13253</strain>
    </source>
</reference>